<accession>A6LMW8</accession>
<protein>
    <recommendedName>
        <fullName evidence="1">Large ribosomal subunit protein bL9</fullName>
    </recommendedName>
    <alternativeName>
        <fullName evidence="2">50S ribosomal protein L9</fullName>
    </alternativeName>
</protein>
<organism>
    <name type="scientific">Thermosipho melanesiensis (strain DSM 12029 / CIP 104789 / BI429)</name>
    <dbReference type="NCBI Taxonomy" id="391009"/>
    <lineage>
        <taxon>Bacteria</taxon>
        <taxon>Thermotogati</taxon>
        <taxon>Thermotogota</taxon>
        <taxon>Thermotogae</taxon>
        <taxon>Thermotogales</taxon>
        <taxon>Fervidobacteriaceae</taxon>
        <taxon>Thermosipho</taxon>
    </lineage>
</organism>
<comment type="function">
    <text evidence="1">Binds to the 23S rRNA.</text>
</comment>
<comment type="similarity">
    <text evidence="1">Belongs to the bacterial ribosomal protein bL9 family.</text>
</comment>
<proteinExistence type="inferred from homology"/>
<evidence type="ECO:0000255" key="1">
    <source>
        <dbReference type="HAMAP-Rule" id="MF_00503"/>
    </source>
</evidence>
<evidence type="ECO:0000305" key="2"/>
<gene>
    <name evidence="1" type="primary">rplI</name>
    <name type="ordered locus">Tmel_1422</name>
</gene>
<reference key="1">
    <citation type="submission" date="2007-05" db="EMBL/GenBank/DDBJ databases">
        <title>Complete sequence of Thermosipho melanesiensis BI429.</title>
        <authorList>
            <consortium name="US DOE Joint Genome Institute"/>
            <person name="Copeland A."/>
            <person name="Lucas S."/>
            <person name="Lapidus A."/>
            <person name="Barry K."/>
            <person name="Glavina del Rio T."/>
            <person name="Dalin E."/>
            <person name="Tice H."/>
            <person name="Pitluck S."/>
            <person name="Chertkov O."/>
            <person name="Brettin T."/>
            <person name="Bruce D."/>
            <person name="Detter J.C."/>
            <person name="Han C."/>
            <person name="Schmutz J."/>
            <person name="Larimer F."/>
            <person name="Land M."/>
            <person name="Hauser L."/>
            <person name="Kyrpides N."/>
            <person name="Mikhailova N."/>
            <person name="Nelson K."/>
            <person name="Gogarten J.P."/>
            <person name="Noll K."/>
            <person name="Richardson P."/>
        </authorList>
    </citation>
    <scope>NUCLEOTIDE SEQUENCE [LARGE SCALE GENOMIC DNA]</scope>
    <source>
        <strain>DSM 12029 / CIP 104789 / BI429</strain>
    </source>
</reference>
<keyword id="KW-0687">Ribonucleoprotein</keyword>
<keyword id="KW-0689">Ribosomal protein</keyword>
<keyword id="KW-0694">RNA-binding</keyword>
<keyword id="KW-0699">rRNA-binding</keyword>
<sequence length="151" mass="16975">MKVVLLKDVSKIGKKGEIKNVSDGYARNYLIPKGLALEATPRVLKRLEAEKRKKEEEKIQIKTQNEELLKMLKKFLYKIPVKAGESGKLFGALTNSDIAKAVEKIADVNIDKKFIVLEKPIKEIGMYDVLVRLPEGVSGKIKVEVIQEGKN</sequence>
<dbReference type="EMBL" id="CP000716">
    <property type="protein sequence ID" value="ABR31269.1"/>
    <property type="molecule type" value="Genomic_DNA"/>
</dbReference>
<dbReference type="RefSeq" id="WP_012057628.1">
    <property type="nucleotide sequence ID" value="NC_009616.1"/>
</dbReference>
<dbReference type="SMR" id="A6LMW8"/>
<dbReference type="STRING" id="391009.Tmel_1422"/>
<dbReference type="KEGG" id="tme:Tmel_1422"/>
<dbReference type="eggNOG" id="COG0359">
    <property type="taxonomic scope" value="Bacteria"/>
</dbReference>
<dbReference type="HOGENOM" id="CLU_078938_3_0_0"/>
<dbReference type="OrthoDB" id="9788336at2"/>
<dbReference type="Proteomes" id="UP000001110">
    <property type="component" value="Chromosome"/>
</dbReference>
<dbReference type="GO" id="GO:1990904">
    <property type="term" value="C:ribonucleoprotein complex"/>
    <property type="evidence" value="ECO:0007669"/>
    <property type="project" value="UniProtKB-KW"/>
</dbReference>
<dbReference type="GO" id="GO:0005840">
    <property type="term" value="C:ribosome"/>
    <property type="evidence" value="ECO:0007669"/>
    <property type="project" value="UniProtKB-KW"/>
</dbReference>
<dbReference type="GO" id="GO:0019843">
    <property type="term" value="F:rRNA binding"/>
    <property type="evidence" value="ECO:0007669"/>
    <property type="project" value="UniProtKB-UniRule"/>
</dbReference>
<dbReference type="GO" id="GO:0003735">
    <property type="term" value="F:structural constituent of ribosome"/>
    <property type="evidence" value="ECO:0007669"/>
    <property type="project" value="InterPro"/>
</dbReference>
<dbReference type="GO" id="GO:0006412">
    <property type="term" value="P:translation"/>
    <property type="evidence" value="ECO:0007669"/>
    <property type="project" value="UniProtKB-UniRule"/>
</dbReference>
<dbReference type="FunFam" id="3.40.5.10:FF:000002">
    <property type="entry name" value="50S ribosomal protein L9"/>
    <property type="match status" value="1"/>
</dbReference>
<dbReference type="Gene3D" id="3.10.430.100">
    <property type="entry name" value="Ribosomal protein L9, C-terminal domain"/>
    <property type="match status" value="1"/>
</dbReference>
<dbReference type="Gene3D" id="3.40.5.10">
    <property type="entry name" value="Ribosomal protein L9, N-terminal domain"/>
    <property type="match status" value="1"/>
</dbReference>
<dbReference type="HAMAP" id="MF_00503">
    <property type="entry name" value="Ribosomal_bL9"/>
    <property type="match status" value="1"/>
</dbReference>
<dbReference type="InterPro" id="IPR000244">
    <property type="entry name" value="Ribosomal_bL9"/>
</dbReference>
<dbReference type="InterPro" id="IPR009027">
    <property type="entry name" value="Ribosomal_bL9/RNase_H1_N"/>
</dbReference>
<dbReference type="InterPro" id="IPR020594">
    <property type="entry name" value="Ribosomal_bL9_bac/chp"/>
</dbReference>
<dbReference type="InterPro" id="IPR020069">
    <property type="entry name" value="Ribosomal_bL9_C"/>
</dbReference>
<dbReference type="InterPro" id="IPR036791">
    <property type="entry name" value="Ribosomal_bL9_C_sf"/>
</dbReference>
<dbReference type="InterPro" id="IPR020070">
    <property type="entry name" value="Ribosomal_bL9_N"/>
</dbReference>
<dbReference type="InterPro" id="IPR036935">
    <property type="entry name" value="Ribosomal_bL9_N_sf"/>
</dbReference>
<dbReference type="NCBIfam" id="TIGR00158">
    <property type="entry name" value="L9"/>
    <property type="match status" value="1"/>
</dbReference>
<dbReference type="PANTHER" id="PTHR21368">
    <property type="entry name" value="50S RIBOSOMAL PROTEIN L9"/>
    <property type="match status" value="1"/>
</dbReference>
<dbReference type="Pfam" id="PF03948">
    <property type="entry name" value="Ribosomal_L9_C"/>
    <property type="match status" value="1"/>
</dbReference>
<dbReference type="Pfam" id="PF01281">
    <property type="entry name" value="Ribosomal_L9_N"/>
    <property type="match status" value="1"/>
</dbReference>
<dbReference type="SUPFAM" id="SSF55658">
    <property type="entry name" value="L9 N-domain-like"/>
    <property type="match status" value="1"/>
</dbReference>
<dbReference type="SUPFAM" id="SSF55653">
    <property type="entry name" value="Ribosomal protein L9 C-domain"/>
    <property type="match status" value="1"/>
</dbReference>
<dbReference type="PROSITE" id="PS00651">
    <property type="entry name" value="RIBOSOMAL_L9"/>
    <property type="match status" value="1"/>
</dbReference>
<name>RL9_THEM4</name>
<feature type="chain" id="PRO_1000014879" description="Large ribosomal subunit protein bL9">
    <location>
        <begin position="1"/>
        <end position="151"/>
    </location>
</feature>